<accession>C5CGR8</accession>
<reference key="1">
    <citation type="submission" date="2009-06" db="EMBL/GenBank/DDBJ databases">
        <title>Complete sequence of Thermotogales bacterium TBF 19.5.1.</title>
        <authorList>
            <consortium name="US DOE Joint Genome Institute"/>
            <person name="Lucas S."/>
            <person name="Copeland A."/>
            <person name="Lapidus A."/>
            <person name="Glavina del Rio T."/>
            <person name="Tice H."/>
            <person name="Bruce D."/>
            <person name="Goodwin L."/>
            <person name="Pitluck S."/>
            <person name="Chertkov O."/>
            <person name="Brettin T."/>
            <person name="Detter J.C."/>
            <person name="Han C."/>
            <person name="Schmutz J."/>
            <person name="Larimer F."/>
            <person name="Land M."/>
            <person name="Hauser L."/>
            <person name="Kyrpides N."/>
            <person name="Ovchinnikova G."/>
            <person name="Noll K."/>
        </authorList>
    </citation>
    <scope>NUCLEOTIDE SEQUENCE [LARGE SCALE GENOMIC DNA]</scope>
    <source>
        <strain>ATCC BAA-1733 / DSM 21960 / TBF 19.5.1</strain>
    </source>
</reference>
<comment type="function">
    <text evidence="1">One of the primary rRNA binding proteins, it binds directly to 16S rRNA where it nucleates assembly of the head domain of the 30S subunit. Is located at the subunit interface close to the decoding center, probably blocks exit of the E-site tRNA.</text>
</comment>
<comment type="subunit">
    <text evidence="1">Part of the 30S ribosomal subunit. Contacts proteins S9 and S11.</text>
</comment>
<comment type="similarity">
    <text evidence="1">Belongs to the universal ribosomal protein uS7 family.</text>
</comment>
<feature type="chain" id="PRO_1000206408" description="Small ribosomal subunit protein uS7">
    <location>
        <begin position="1"/>
        <end position="155"/>
    </location>
</feature>
<protein>
    <recommendedName>
        <fullName evidence="1">Small ribosomal subunit protein uS7</fullName>
    </recommendedName>
    <alternativeName>
        <fullName evidence="2">30S ribosomal protein S7</fullName>
    </alternativeName>
</protein>
<organism>
    <name type="scientific">Kosmotoga olearia (strain ATCC BAA-1733 / DSM 21960 / TBF 19.5.1)</name>
    <dbReference type="NCBI Taxonomy" id="521045"/>
    <lineage>
        <taxon>Bacteria</taxon>
        <taxon>Thermotogati</taxon>
        <taxon>Thermotogota</taxon>
        <taxon>Thermotogae</taxon>
        <taxon>Kosmotogales</taxon>
        <taxon>Kosmotogaceae</taxon>
        <taxon>Kosmotoga</taxon>
    </lineage>
</organism>
<dbReference type="EMBL" id="CP001634">
    <property type="protein sequence ID" value="ACR80587.1"/>
    <property type="molecule type" value="Genomic_DNA"/>
</dbReference>
<dbReference type="RefSeq" id="WP_015869230.1">
    <property type="nucleotide sequence ID" value="NC_012785.1"/>
</dbReference>
<dbReference type="SMR" id="C5CGR8"/>
<dbReference type="STRING" id="521045.Kole_1906"/>
<dbReference type="KEGG" id="kol:Kole_1906"/>
<dbReference type="eggNOG" id="COG0049">
    <property type="taxonomic scope" value="Bacteria"/>
</dbReference>
<dbReference type="HOGENOM" id="CLU_072226_1_1_0"/>
<dbReference type="OrthoDB" id="9807653at2"/>
<dbReference type="Proteomes" id="UP000002382">
    <property type="component" value="Chromosome"/>
</dbReference>
<dbReference type="GO" id="GO:0015935">
    <property type="term" value="C:small ribosomal subunit"/>
    <property type="evidence" value="ECO:0007669"/>
    <property type="project" value="InterPro"/>
</dbReference>
<dbReference type="GO" id="GO:0019843">
    <property type="term" value="F:rRNA binding"/>
    <property type="evidence" value="ECO:0007669"/>
    <property type="project" value="UniProtKB-UniRule"/>
</dbReference>
<dbReference type="GO" id="GO:0003735">
    <property type="term" value="F:structural constituent of ribosome"/>
    <property type="evidence" value="ECO:0007669"/>
    <property type="project" value="InterPro"/>
</dbReference>
<dbReference type="GO" id="GO:0000049">
    <property type="term" value="F:tRNA binding"/>
    <property type="evidence" value="ECO:0007669"/>
    <property type="project" value="UniProtKB-UniRule"/>
</dbReference>
<dbReference type="GO" id="GO:0006412">
    <property type="term" value="P:translation"/>
    <property type="evidence" value="ECO:0007669"/>
    <property type="project" value="UniProtKB-UniRule"/>
</dbReference>
<dbReference type="CDD" id="cd14869">
    <property type="entry name" value="uS7_Bacteria"/>
    <property type="match status" value="1"/>
</dbReference>
<dbReference type="FunFam" id="1.10.455.10:FF:000001">
    <property type="entry name" value="30S ribosomal protein S7"/>
    <property type="match status" value="1"/>
</dbReference>
<dbReference type="Gene3D" id="1.10.455.10">
    <property type="entry name" value="Ribosomal protein S7 domain"/>
    <property type="match status" value="1"/>
</dbReference>
<dbReference type="HAMAP" id="MF_00480_B">
    <property type="entry name" value="Ribosomal_uS7_B"/>
    <property type="match status" value="1"/>
</dbReference>
<dbReference type="InterPro" id="IPR000235">
    <property type="entry name" value="Ribosomal_uS7"/>
</dbReference>
<dbReference type="InterPro" id="IPR005717">
    <property type="entry name" value="Ribosomal_uS7_bac/org-type"/>
</dbReference>
<dbReference type="InterPro" id="IPR020606">
    <property type="entry name" value="Ribosomal_uS7_CS"/>
</dbReference>
<dbReference type="InterPro" id="IPR023798">
    <property type="entry name" value="Ribosomal_uS7_dom"/>
</dbReference>
<dbReference type="InterPro" id="IPR036823">
    <property type="entry name" value="Ribosomal_uS7_dom_sf"/>
</dbReference>
<dbReference type="NCBIfam" id="TIGR01029">
    <property type="entry name" value="rpsG_bact"/>
    <property type="match status" value="1"/>
</dbReference>
<dbReference type="PANTHER" id="PTHR11205">
    <property type="entry name" value="RIBOSOMAL PROTEIN S7"/>
    <property type="match status" value="1"/>
</dbReference>
<dbReference type="Pfam" id="PF00177">
    <property type="entry name" value="Ribosomal_S7"/>
    <property type="match status" value="1"/>
</dbReference>
<dbReference type="PIRSF" id="PIRSF002122">
    <property type="entry name" value="RPS7p_RPS7a_RPS5e_RPS7o"/>
    <property type="match status" value="1"/>
</dbReference>
<dbReference type="SUPFAM" id="SSF47973">
    <property type="entry name" value="Ribosomal protein S7"/>
    <property type="match status" value="1"/>
</dbReference>
<dbReference type="PROSITE" id="PS00052">
    <property type="entry name" value="RIBOSOMAL_S7"/>
    <property type="match status" value="1"/>
</dbReference>
<keyword id="KW-1185">Reference proteome</keyword>
<keyword id="KW-0687">Ribonucleoprotein</keyword>
<keyword id="KW-0689">Ribosomal protein</keyword>
<keyword id="KW-0694">RNA-binding</keyword>
<keyword id="KW-0699">rRNA-binding</keyword>
<keyword id="KW-0820">tRNA-binding</keyword>
<sequence length="155" mass="17653">MRRRRAVKREVAPDPIYNDVLVTKLINRVMKDGKKSKAEKIVYKALEMLSEKTKQPPMEAFKKAINNVKPLLEVRPRRVGGATYQIPFEVPEDRALSLALRWIVAAARAKSGRPTSERLALELIDAYNGTGVAVKKREDVHRMAEAGKAYAHFRW</sequence>
<evidence type="ECO:0000255" key="1">
    <source>
        <dbReference type="HAMAP-Rule" id="MF_00480"/>
    </source>
</evidence>
<evidence type="ECO:0000305" key="2"/>
<proteinExistence type="inferred from homology"/>
<name>RS7_KOSOT</name>
<gene>
    <name evidence="1" type="primary">rpsG</name>
    <name type="ordered locus">Kole_1906</name>
</gene>